<reference key="1">
    <citation type="submission" date="2006-08" db="EMBL/GenBank/DDBJ databases">
        <title>Complete sequence of chromosome 1 of Burkholderia cenocepacia HI2424.</title>
        <authorList>
            <person name="Copeland A."/>
            <person name="Lucas S."/>
            <person name="Lapidus A."/>
            <person name="Barry K."/>
            <person name="Detter J.C."/>
            <person name="Glavina del Rio T."/>
            <person name="Hammon N."/>
            <person name="Israni S."/>
            <person name="Pitluck S."/>
            <person name="Chain P."/>
            <person name="Malfatti S."/>
            <person name="Shin M."/>
            <person name="Vergez L."/>
            <person name="Schmutz J."/>
            <person name="Larimer F."/>
            <person name="Land M."/>
            <person name="Hauser L."/>
            <person name="Kyrpides N."/>
            <person name="Kim E."/>
            <person name="LiPuma J.J."/>
            <person name="Gonzalez C.F."/>
            <person name="Konstantinidis K."/>
            <person name="Tiedje J.M."/>
            <person name="Richardson P."/>
        </authorList>
    </citation>
    <scope>NUCLEOTIDE SEQUENCE [LARGE SCALE GENOMIC DNA]</scope>
    <source>
        <strain>HI2424</strain>
    </source>
</reference>
<protein>
    <recommendedName>
        <fullName evidence="1">Large ribosomal subunit protein uL5</fullName>
    </recommendedName>
    <alternativeName>
        <fullName evidence="2">50S ribosomal protein L5</fullName>
    </alternativeName>
</protein>
<gene>
    <name evidence="1" type="primary">rplE</name>
    <name type="ordered locus">Bcen2424_0360</name>
</gene>
<sequence>MARFQEFYKEKVVPGLIEKFGYKSVMEVPRITKITLNMGLGEAIADKKIIENAVGDLTKIAGQKPVVTKARKAIAGFKIRQGYPIGAMVTLRGQAMYEFLDRFVTVALPRVRDFRGVSGRAFDGRGNYNIGVKEQIIFPEIDYDKIDALRGLNISITTTAKTDDEAKALLASFKFPFRN</sequence>
<comment type="function">
    <text evidence="1">This is one of the proteins that bind and probably mediate the attachment of the 5S RNA into the large ribosomal subunit, where it forms part of the central protuberance. In the 70S ribosome it contacts protein S13 of the 30S subunit (bridge B1b), connecting the 2 subunits; this bridge is implicated in subunit movement. Contacts the P site tRNA; the 5S rRNA and some of its associated proteins might help stabilize positioning of ribosome-bound tRNAs.</text>
</comment>
<comment type="subunit">
    <text evidence="1">Part of the 50S ribosomal subunit; part of the 5S rRNA/L5/L18/L25 subcomplex. Contacts the 5S rRNA and the P site tRNA. Forms a bridge to the 30S subunit in the 70S ribosome.</text>
</comment>
<comment type="similarity">
    <text evidence="1">Belongs to the universal ribosomal protein uL5 family.</text>
</comment>
<dbReference type="EMBL" id="CP000458">
    <property type="protein sequence ID" value="ABK07114.1"/>
    <property type="molecule type" value="Genomic_DNA"/>
</dbReference>
<dbReference type="RefSeq" id="WP_006477186.1">
    <property type="nucleotide sequence ID" value="NC_008542.1"/>
</dbReference>
<dbReference type="SMR" id="A0K3N7"/>
<dbReference type="GeneID" id="93193439"/>
<dbReference type="KEGG" id="bch:Bcen2424_0360"/>
<dbReference type="HOGENOM" id="CLU_061015_2_1_4"/>
<dbReference type="GO" id="GO:1990904">
    <property type="term" value="C:ribonucleoprotein complex"/>
    <property type="evidence" value="ECO:0007669"/>
    <property type="project" value="UniProtKB-KW"/>
</dbReference>
<dbReference type="GO" id="GO:0005840">
    <property type="term" value="C:ribosome"/>
    <property type="evidence" value="ECO:0007669"/>
    <property type="project" value="UniProtKB-KW"/>
</dbReference>
<dbReference type="GO" id="GO:0019843">
    <property type="term" value="F:rRNA binding"/>
    <property type="evidence" value="ECO:0007669"/>
    <property type="project" value="UniProtKB-UniRule"/>
</dbReference>
<dbReference type="GO" id="GO:0003735">
    <property type="term" value="F:structural constituent of ribosome"/>
    <property type="evidence" value="ECO:0007669"/>
    <property type="project" value="InterPro"/>
</dbReference>
<dbReference type="GO" id="GO:0000049">
    <property type="term" value="F:tRNA binding"/>
    <property type="evidence" value="ECO:0007669"/>
    <property type="project" value="UniProtKB-UniRule"/>
</dbReference>
<dbReference type="GO" id="GO:0006412">
    <property type="term" value="P:translation"/>
    <property type="evidence" value="ECO:0007669"/>
    <property type="project" value="UniProtKB-UniRule"/>
</dbReference>
<dbReference type="FunFam" id="3.30.1440.10:FF:000001">
    <property type="entry name" value="50S ribosomal protein L5"/>
    <property type="match status" value="1"/>
</dbReference>
<dbReference type="Gene3D" id="3.30.1440.10">
    <property type="match status" value="1"/>
</dbReference>
<dbReference type="HAMAP" id="MF_01333_B">
    <property type="entry name" value="Ribosomal_uL5_B"/>
    <property type="match status" value="1"/>
</dbReference>
<dbReference type="InterPro" id="IPR002132">
    <property type="entry name" value="Ribosomal_uL5"/>
</dbReference>
<dbReference type="InterPro" id="IPR020930">
    <property type="entry name" value="Ribosomal_uL5_bac-type"/>
</dbReference>
<dbReference type="InterPro" id="IPR031309">
    <property type="entry name" value="Ribosomal_uL5_C"/>
</dbReference>
<dbReference type="InterPro" id="IPR020929">
    <property type="entry name" value="Ribosomal_uL5_CS"/>
</dbReference>
<dbReference type="InterPro" id="IPR022803">
    <property type="entry name" value="Ribosomal_uL5_dom_sf"/>
</dbReference>
<dbReference type="InterPro" id="IPR031310">
    <property type="entry name" value="Ribosomal_uL5_N"/>
</dbReference>
<dbReference type="NCBIfam" id="NF000585">
    <property type="entry name" value="PRK00010.1"/>
    <property type="match status" value="1"/>
</dbReference>
<dbReference type="PANTHER" id="PTHR11994">
    <property type="entry name" value="60S RIBOSOMAL PROTEIN L11-RELATED"/>
    <property type="match status" value="1"/>
</dbReference>
<dbReference type="Pfam" id="PF00281">
    <property type="entry name" value="Ribosomal_L5"/>
    <property type="match status" value="1"/>
</dbReference>
<dbReference type="Pfam" id="PF00673">
    <property type="entry name" value="Ribosomal_L5_C"/>
    <property type="match status" value="1"/>
</dbReference>
<dbReference type="PIRSF" id="PIRSF002161">
    <property type="entry name" value="Ribosomal_L5"/>
    <property type="match status" value="1"/>
</dbReference>
<dbReference type="SUPFAM" id="SSF55282">
    <property type="entry name" value="RL5-like"/>
    <property type="match status" value="1"/>
</dbReference>
<dbReference type="PROSITE" id="PS00358">
    <property type="entry name" value="RIBOSOMAL_L5"/>
    <property type="match status" value="1"/>
</dbReference>
<feature type="chain" id="PRO_1000052702" description="Large ribosomal subunit protein uL5">
    <location>
        <begin position="1"/>
        <end position="179"/>
    </location>
</feature>
<organism>
    <name type="scientific">Burkholderia cenocepacia (strain HI2424)</name>
    <dbReference type="NCBI Taxonomy" id="331272"/>
    <lineage>
        <taxon>Bacteria</taxon>
        <taxon>Pseudomonadati</taxon>
        <taxon>Pseudomonadota</taxon>
        <taxon>Betaproteobacteria</taxon>
        <taxon>Burkholderiales</taxon>
        <taxon>Burkholderiaceae</taxon>
        <taxon>Burkholderia</taxon>
        <taxon>Burkholderia cepacia complex</taxon>
    </lineage>
</organism>
<evidence type="ECO:0000255" key="1">
    <source>
        <dbReference type="HAMAP-Rule" id="MF_01333"/>
    </source>
</evidence>
<evidence type="ECO:0000305" key="2"/>
<accession>A0K3N7</accession>
<proteinExistence type="inferred from homology"/>
<name>RL5_BURCH</name>
<keyword id="KW-0687">Ribonucleoprotein</keyword>
<keyword id="KW-0689">Ribosomal protein</keyword>
<keyword id="KW-0694">RNA-binding</keyword>
<keyword id="KW-0699">rRNA-binding</keyword>
<keyword id="KW-0820">tRNA-binding</keyword>